<proteinExistence type="evidence at transcript level"/>
<name>LRC33_DANRE</name>
<comment type="function">
    <text evidence="1">Key regulator of transforming growth factor beta-1 (TGFB1) specifically required for microglia function in the nervous system. Required for activation of latent TGF-beta-1 in macrophages and microglia: associates specifically via disulfide bonds with the Latency-associated peptide (LAP), which is the regulatory chain of TGFB1, and regulates integrin-dependent activation of TGF-beta-1. TGF-beta-1 activation mediated by lrrc33/nrros is highly localized: there is little spreading of TGF-beta-1 activated from one microglial cell to neighboring microglia, suggesting the existence of localized and selective activation of TGF-beta-1 by lrrc33/nrros.</text>
</comment>
<comment type="subcellular location">
    <subcellularLocation>
        <location evidence="1">Cell membrane</location>
        <topology evidence="2">Single-pass type I membrane protein</topology>
    </subcellularLocation>
    <subcellularLocation>
        <location evidence="1">Endoplasmic reticulum membrane</location>
        <topology evidence="2">Single-pass type I membrane protein</topology>
    </subcellularLocation>
</comment>
<comment type="similarity">
    <text evidence="4">Belongs to the LRRC32/LRRC33 family.</text>
</comment>
<feature type="signal peptide" evidence="2">
    <location>
        <begin position="1"/>
        <end position="27"/>
    </location>
</feature>
<feature type="chain" id="PRO_0000042663" description="Transforming growth factor beta activator LRRC33">
    <location>
        <begin position="28"/>
        <end position="685"/>
    </location>
</feature>
<feature type="topological domain" description="Extracellular" evidence="2">
    <location>
        <begin position="28"/>
        <end position="640"/>
    </location>
</feature>
<feature type="transmembrane region" description="Helical" evidence="2">
    <location>
        <begin position="641"/>
        <end position="661"/>
    </location>
</feature>
<feature type="topological domain" description="Cytoplasmic" evidence="2">
    <location>
        <begin position="662"/>
        <end position="685"/>
    </location>
</feature>
<feature type="domain" description="LRRNT" evidence="2">
    <location>
        <begin position="29"/>
        <end position="56"/>
    </location>
</feature>
<feature type="repeat" description="LRR 1" evidence="2">
    <location>
        <begin position="57"/>
        <end position="79"/>
    </location>
</feature>
<feature type="repeat" description="LRR 2" evidence="2">
    <location>
        <begin position="80"/>
        <end position="102"/>
    </location>
</feature>
<feature type="repeat" description="LRR 3" evidence="2">
    <location>
        <begin position="103"/>
        <end position="129"/>
    </location>
</feature>
<feature type="repeat" description="LRR 4" evidence="2">
    <location>
        <begin position="130"/>
        <end position="154"/>
    </location>
</feature>
<feature type="repeat" description="LRR 5" evidence="2">
    <location>
        <begin position="155"/>
        <end position="178"/>
    </location>
</feature>
<feature type="repeat" description="LRR 6" evidence="2">
    <location>
        <begin position="180"/>
        <end position="201"/>
    </location>
</feature>
<feature type="repeat" description="LRR 7" evidence="2">
    <location>
        <begin position="202"/>
        <end position="225"/>
    </location>
</feature>
<feature type="repeat" description="LRR 8" evidence="2">
    <location>
        <begin position="248"/>
        <end position="271"/>
    </location>
</feature>
<feature type="repeat" description="LRR 9" evidence="2">
    <location>
        <begin position="273"/>
        <end position="296"/>
    </location>
</feature>
<feature type="repeat" description="LRR 10" evidence="2">
    <location>
        <begin position="326"/>
        <end position="349"/>
    </location>
</feature>
<feature type="repeat" description="LRR 11" evidence="2">
    <location>
        <begin position="351"/>
        <end position="373"/>
    </location>
</feature>
<feature type="repeat" description="LRR 12" evidence="2">
    <location>
        <begin position="374"/>
        <end position="397"/>
    </location>
</feature>
<feature type="repeat" description="LRR 13" evidence="2">
    <location>
        <begin position="400"/>
        <end position="423"/>
    </location>
</feature>
<feature type="repeat" description="LRR 14" evidence="2">
    <location>
        <begin position="425"/>
        <end position="447"/>
    </location>
</feature>
<feature type="repeat" description="LRR 15" evidence="2">
    <location>
        <begin position="457"/>
        <end position="480"/>
    </location>
</feature>
<feature type="repeat" description="LRR 16" evidence="2">
    <location>
        <begin position="482"/>
        <end position="503"/>
    </location>
</feature>
<feature type="repeat" description="LRR 17" evidence="2">
    <location>
        <begin position="505"/>
        <end position="526"/>
    </location>
</feature>
<feature type="repeat" description="LRR 18" evidence="2">
    <location>
        <begin position="527"/>
        <end position="549"/>
    </location>
</feature>
<feature type="repeat" description="LRR 19" evidence="2">
    <location>
        <begin position="551"/>
        <end position="571"/>
    </location>
</feature>
<feature type="repeat" description="LRR 20" evidence="2">
    <location>
        <begin position="573"/>
        <end position="596"/>
    </location>
</feature>
<feature type="domain" description="LRRCT" evidence="2">
    <location>
        <begin position="597"/>
        <end position="635"/>
    </location>
</feature>
<feature type="glycosylation site" description="N-linked (GlcNAc...) asparagine" evidence="2">
    <location>
        <position position="154"/>
    </location>
</feature>
<feature type="glycosylation site" description="N-linked (GlcNAc...) asparagine" evidence="2">
    <location>
        <position position="230"/>
    </location>
</feature>
<feature type="glycosylation site" description="N-linked (GlcNAc...) asparagine" evidence="2">
    <location>
        <position position="244"/>
    </location>
</feature>
<feature type="glycosylation site" description="N-linked (GlcNAc...) asparagine" evidence="2">
    <location>
        <position position="291"/>
    </location>
</feature>
<feature type="glycosylation site" description="N-linked (GlcNAc...) asparagine" evidence="2">
    <location>
        <position position="296"/>
    </location>
</feature>
<feature type="glycosylation site" description="N-linked (GlcNAc...) asparagine" evidence="2">
    <location>
        <position position="309"/>
    </location>
</feature>
<feature type="glycosylation site" description="N-linked (GlcNAc...) asparagine" evidence="2">
    <location>
        <position position="312"/>
    </location>
</feature>
<feature type="glycosylation site" description="N-linked (GlcNAc...) asparagine" evidence="2">
    <location>
        <position position="325"/>
    </location>
</feature>
<feature type="glycosylation site" description="N-linked (GlcNAc...) asparagine" evidence="2">
    <location>
        <position position="402"/>
    </location>
</feature>
<feature type="glycosylation site" description="N-linked (GlcNAc...) asparagine" evidence="2">
    <location>
        <position position="407"/>
    </location>
</feature>
<feature type="glycosylation site" description="N-linked (GlcNAc...) asparagine" evidence="2">
    <location>
        <position position="533"/>
    </location>
</feature>
<feature type="disulfide bond" description="Interchain (with C-? in TGFB1); in linked form" evidence="1">
    <location>
        <position position="217"/>
    </location>
</feature>
<feature type="disulfide bond" description="Interchain (with C-? in TGFB1); in linked form" evidence="1">
    <location>
        <position position="362"/>
    </location>
</feature>
<accession>Q6AXL3</accession>
<sequence length="685" mass="77765">MPVCGCLSVVLSHAVVLLMLVLHSASGHPQTFPCRLIQRVALCSGRQLSVIPDCLPHETEEIFFDRNLLENLQDGLSRYPFLRMFSCANNQLMTVAETAFIESHLLENLNLANNELHHGHKQVAQAFRSLTQLKTLDLSGNGLSEDMVSVLVANLSSLESLYLSRNGMQRLDESTFRDLHQLKELNVERNLLFEISGAFDHMKKLQRLNLAFNCLPCLVNFEMTQLLVLNASHNSIEWFITNQNLTETFQLETLDLSDNHLLFFPFLPTNNQIRTLLLSNNRVGFYQHLANSTSSNWTTSVDYYNLGQNISNITMDLWNENLHGNLSSVEFLDLSENKVNYFPQGFIKQMPQLYWLKLRSNCLQSFSLTSEDLPVTIYELDVSRNRLTEIKASQTSKNKLNNLTHLNLSTNDLQNFPPMIFTSLPNLNTLDLSHNTVDVCYSSNYMGLSGCVEWSSMASLKQLYLADCSIQNVPSSAFKGTSLTHLELSNNPNLHLKQQSLKGLANTLQHLGIGNTGLQDFDFSPYTNLKSLNISRNSLSKLPDSLMALNLKLLDLRDNSLTTIKSEHASLLAKKLQTVYMNGNAFNCCHLDWFRTFGENKGIHVADLSEITCLDLNYRRHKVVLTDAVYCGFTNNNKESVVWYILLFVTVSVSIMGISVIYMLTFKPRMLPRVIKKKCWRPTSY</sequence>
<protein>
    <recommendedName>
        <fullName evidence="4">Transforming growth factor beta activator LRRC33</fullName>
    </recommendedName>
    <alternativeName>
        <fullName evidence="4">Leucine-rich repeat-containing protein 33</fullName>
    </alternativeName>
    <alternativeName>
        <fullName evidence="1">Negative regulator of reactive oxygen species</fullName>
    </alternativeName>
</protein>
<keyword id="KW-1003">Cell membrane</keyword>
<keyword id="KW-1015">Disulfide bond</keyword>
<keyword id="KW-0256">Endoplasmic reticulum</keyword>
<keyword id="KW-0325">Glycoprotein</keyword>
<keyword id="KW-0340">Growth factor binding</keyword>
<keyword id="KW-0433">Leucine-rich repeat</keyword>
<keyword id="KW-0472">Membrane</keyword>
<keyword id="KW-1185">Reference proteome</keyword>
<keyword id="KW-0677">Repeat</keyword>
<keyword id="KW-0732">Signal</keyword>
<keyword id="KW-0812">Transmembrane</keyword>
<keyword id="KW-1133">Transmembrane helix</keyword>
<reference key="1">
    <citation type="submission" date="2004-08" db="EMBL/GenBank/DDBJ databases">
        <authorList>
            <consortium name="NIH - Zebrafish Gene Collection (ZGC) project"/>
        </authorList>
    </citation>
    <scope>NUCLEOTIDE SEQUENCE [LARGE SCALE MRNA]</scope>
    <source>
        <tissue>Embryo</tissue>
    </source>
</reference>
<gene>
    <name evidence="1" type="primary">nrros</name>
    <name evidence="1" type="synonym">lrrc33</name>
    <name evidence="3" type="ORF">zgc:100989</name>
</gene>
<dbReference type="EMBL" id="BC079491">
    <property type="protein sequence ID" value="AAH79491.1"/>
    <property type="molecule type" value="mRNA"/>
</dbReference>
<dbReference type="RefSeq" id="NP_001003775.1">
    <property type="nucleotide sequence ID" value="NM_001003775.2"/>
</dbReference>
<dbReference type="SMR" id="Q6AXL3"/>
<dbReference type="FunCoup" id="Q6AXL3">
    <property type="interactions" value="121"/>
</dbReference>
<dbReference type="STRING" id="7955.ENSDARP00000096527"/>
<dbReference type="GlyCosmos" id="Q6AXL3">
    <property type="glycosylation" value="11 sites, No reported glycans"/>
</dbReference>
<dbReference type="PaxDb" id="7955-ENSDARP00000096527"/>
<dbReference type="Ensembl" id="ENSDART00000163147">
    <property type="protein sequence ID" value="ENSDARP00000135592"/>
    <property type="gene ID" value="ENSDARG00000112102"/>
</dbReference>
<dbReference type="GeneID" id="445318"/>
<dbReference type="KEGG" id="dre:445318"/>
<dbReference type="AGR" id="ZFIN:ZDB-GENE-040808-36"/>
<dbReference type="CTD" id="375387"/>
<dbReference type="ZFIN" id="ZDB-GENE-040808-36">
    <property type="gene designation" value="nrros"/>
</dbReference>
<dbReference type="eggNOG" id="KOG0619">
    <property type="taxonomic scope" value="Eukaryota"/>
</dbReference>
<dbReference type="InParanoid" id="Q6AXL3"/>
<dbReference type="OMA" id="DWAMVTC"/>
<dbReference type="OrthoDB" id="676979at2759"/>
<dbReference type="PhylomeDB" id="Q6AXL3"/>
<dbReference type="Reactome" id="R-DRE-1679131">
    <property type="pathway name" value="Trafficking and processing of endosomal TLR"/>
</dbReference>
<dbReference type="PRO" id="PR:Q6AXL3"/>
<dbReference type="Proteomes" id="UP000000437">
    <property type="component" value="Alternate scaffold 24"/>
</dbReference>
<dbReference type="Proteomes" id="UP000000437">
    <property type="component" value="Chromosome 24"/>
</dbReference>
<dbReference type="Bgee" id="ENSDARG00000112102">
    <property type="expression patterns" value="Expressed in macrophage and 7 other cell types or tissues"/>
</dbReference>
<dbReference type="GO" id="GO:0009986">
    <property type="term" value="C:cell surface"/>
    <property type="evidence" value="ECO:0000250"/>
    <property type="project" value="UniProtKB"/>
</dbReference>
<dbReference type="GO" id="GO:0005783">
    <property type="term" value="C:endoplasmic reticulum"/>
    <property type="evidence" value="ECO:0000250"/>
    <property type="project" value="UniProtKB"/>
</dbReference>
<dbReference type="GO" id="GO:0005789">
    <property type="term" value="C:endoplasmic reticulum membrane"/>
    <property type="evidence" value="ECO:0007669"/>
    <property type="project" value="UniProtKB-SubCell"/>
</dbReference>
<dbReference type="GO" id="GO:0031012">
    <property type="term" value="C:extracellular matrix"/>
    <property type="evidence" value="ECO:0000318"/>
    <property type="project" value="GO_Central"/>
</dbReference>
<dbReference type="GO" id="GO:0005615">
    <property type="term" value="C:extracellular space"/>
    <property type="evidence" value="ECO:0000318"/>
    <property type="project" value="GO_Central"/>
</dbReference>
<dbReference type="GO" id="GO:0005886">
    <property type="term" value="C:plasma membrane"/>
    <property type="evidence" value="ECO:0007669"/>
    <property type="project" value="UniProtKB-SubCell"/>
</dbReference>
<dbReference type="GO" id="GO:0019838">
    <property type="term" value="F:growth factor binding"/>
    <property type="evidence" value="ECO:0007669"/>
    <property type="project" value="UniProtKB-KW"/>
</dbReference>
<dbReference type="GO" id="GO:0141069">
    <property type="term" value="F:receptor ligand inhibitor activity"/>
    <property type="evidence" value="ECO:0000250"/>
    <property type="project" value="UniProtKB"/>
</dbReference>
<dbReference type="GO" id="GO:0006955">
    <property type="term" value="P:immune response"/>
    <property type="evidence" value="ECO:0000250"/>
    <property type="project" value="UniProtKB"/>
</dbReference>
<dbReference type="GO" id="GO:0006954">
    <property type="term" value="P:inflammatory response"/>
    <property type="evidence" value="ECO:0000250"/>
    <property type="project" value="UniProtKB"/>
</dbReference>
<dbReference type="GO" id="GO:0014005">
    <property type="term" value="P:microglia development"/>
    <property type="evidence" value="ECO:0000250"/>
    <property type="project" value="UniProtKB"/>
</dbReference>
<dbReference type="GO" id="GO:0035583">
    <property type="term" value="P:sequestering of TGFbeta in extracellular matrix"/>
    <property type="evidence" value="ECO:0000250"/>
    <property type="project" value="UniProtKB"/>
</dbReference>
<dbReference type="Gene3D" id="3.80.10.10">
    <property type="entry name" value="Ribonuclease Inhibitor"/>
    <property type="match status" value="5"/>
</dbReference>
<dbReference type="InterPro" id="IPR050328">
    <property type="entry name" value="Dev_Immune_Receptor"/>
</dbReference>
<dbReference type="InterPro" id="IPR001611">
    <property type="entry name" value="Leu-rich_rpt"/>
</dbReference>
<dbReference type="InterPro" id="IPR003591">
    <property type="entry name" value="Leu-rich_rpt_typical-subtyp"/>
</dbReference>
<dbReference type="InterPro" id="IPR026906">
    <property type="entry name" value="LRR_5"/>
</dbReference>
<dbReference type="InterPro" id="IPR032675">
    <property type="entry name" value="LRR_dom_sf"/>
</dbReference>
<dbReference type="PANTHER" id="PTHR24373:SF38">
    <property type="entry name" value="LEUCINE-RICH REPEAT AND IMMUNOGLOBULIN-LIKE DOMAIN-CONTAINING NOGO RECEPTOR-INTERACTING PROTEIN 2"/>
    <property type="match status" value="1"/>
</dbReference>
<dbReference type="PANTHER" id="PTHR24373">
    <property type="entry name" value="SLIT RELATED LEUCINE-RICH REPEAT NEURONAL PROTEIN"/>
    <property type="match status" value="1"/>
</dbReference>
<dbReference type="Pfam" id="PF13306">
    <property type="entry name" value="LRR_5"/>
    <property type="match status" value="1"/>
</dbReference>
<dbReference type="Pfam" id="PF13855">
    <property type="entry name" value="LRR_8"/>
    <property type="match status" value="2"/>
</dbReference>
<dbReference type="SMART" id="SM00364">
    <property type="entry name" value="LRR_BAC"/>
    <property type="match status" value="4"/>
</dbReference>
<dbReference type="SMART" id="SM00369">
    <property type="entry name" value="LRR_TYP"/>
    <property type="match status" value="9"/>
</dbReference>
<dbReference type="SUPFAM" id="SSF52058">
    <property type="entry name" value="L domain-like"/>
    <property type="match status" value="2"/>
</dbReference>
<dbReference type="PROSITE" id="PS51450">
    <property type="entry name" value="LRR"/>
    <property type="match status" value="16"/>
</dbReference>
<organism>
    <name type="scientific">Danio rerio</name>
    <name type="common">Zebrafish</name>
    <name type="synonym">Brachydanio rerio</name>
    <dbReference type="NCBI Taxonomy" id="7955"/>
    <lineage>
        <taxon>Eukaryota</taxon>
        <taxon>Metazoa</taxon>
        <taxon>Chordata</taxon>
        <taxon>Craniata</taxon>
        <taxon>Vertebrata</taxon>
        <taxon>Euteleostomi</taxon>
        <taxon>Actinopterygii</taxon>
        <taxon>Neopterygii</taxon>
        <taxon>Teleostei</taxon>
        <taxon>Ostariophysi</taxon>
        <taxon>Cypriniformes</taxon>
        <taxon>Danionidae</taxon>
        <taxon>Danioninae</taxon>
        <taxon>Danio</taxon>
    </lineage>
</organism>
<evidence type="ECO:0000250" key="1">
    <source>
        <dbReference type="UniProtKB" id="Q8BMT4"/>
    </source>
</evidence>
<evidence type="ECO:0000255" key="2"/>
<evidence type="ECO:0000303" key="3">
    <source ref="1"/>
</evidence>
<evidence type="ECO:0000305" key="4"/>